<dbReference type="EC" id="2.7.1.148" evidence="1"/>
<dbReference type="EMBL" id="AP009049">
    <property type="protein sequence ID" value="BAH08339.1"/>
    <property type="molecule type" value="Genomic_DNA"/>
</dbReference>
<dbReference type="RefSeq" id="WP_012104043.1">
    <property type="nucleotide sequence ID" value="NC_011837.1"/>
</dbReference>
<dbReference type="SMR" id="B9DX96"/>
<dbReference type="KEGG" id="ckr:CKR_3288"/>
<dbReference type="HOGENOM" id="CLU_053057_1_1_9"/>
<dbReference type="UniPathway" id="UPA00056">
    <property type="reaction ID" value="UER00094"/>
</dbReference>
<dbReference type="Proteomes" id="UP000007969">
    <property type="component" value="Chromosome"/>
</dbReference>
<dbReference type="GO" id="GO:0050515">
    <property type="term" value="F:4-(cytidine 5'-diphospho)-2-C-methyl-D-erythritol kinase activity"/>
    <property type="evidence" value="ECO:0007669"/>
    <property type="project" value="UniProtKB-UniRule"/>
</dbReference>
<dbReference type="GO" id="GO:0005524">
    <property type="term" value="F:ATP binding"/>
    <property type="evidence" value="ECO:0007669"/>
    <property type="project" value="UniProtKB-UniRule"/>
</dbReference>
<dbReference type="GO" id="GO:0019288">
    <property type="term" value="P:isopentenyl diphosphate biosynthetic process, methylerythritol 4-phosphate pathway"/>
    <property type="evidence" value="ECO:0007669"/>
    <property type="project" value="UniProtKB-UniRule"/>
</dbReference>
<dbReference type="GO" id="GO:0016114">
    <property type="term" value="P:terpenoid biosynthetic process"/>
    <property type="evidence" value="ECO:0007669"/>
    <property type="project" value="InterPro"/>
</dbReference>
<dbReference type="Gene3D" id="3.30.230.10">
    <property type="match status" value="1"/>
</dbReference>
<dbReference type="Gene3D" id="3.30.70.890">
    <property type="entry name" value="GHMP kinase, C-terminal domain"/>
    <property type="match status" value="1"/>
</dbReference>
<dbReference type="HAMAP" id="MF_00061">
    <property type="entry name" value="IspE"/>
    <property type="match status" value="1"/>
</dbReference>
<dbReference type="InterPro" id="IPR013750">
    <property type="entry name" value="GHMP_kinase_C_dom"/>
</dbReference>
<dbReference type="InterPro" id="IPR036554">
    <property type="entry name" value="GHMP_kinase_C_sf"/>
</dbReference>
<dbReference type="InterPro" id="IPR006204">
    <property type="entry name" value="GHMP_kinase_N_dom"/>
</dbReference>
<dbReference type="InterPro" id="IPR004424">
    <property type="entry name" value="IspE"/>
</dbReference>
<dbReference type="InterPro" id="IPR020568">
    <property type="entry name" value="Ribosomal_Su5_D2-typ_SF"/>
</dbReference>
<dbReference type="InterPro" id="IPR014721">
    <property type="entry name" value="Ribsml_uS5_D2-typ_fold_subgr"/>
</dbReference>
<dbReference type="NCBIfam" id="TIGR00154">
    <property type="entry name" value="ispE"/>
    <property type="match status" value="1"/>
</dbReference>
<dbReference type="PANTHER" id="PTHR43527">
    <property type="entry name" value="4-DIPHOSPHOCYTIDYL-2-C-METHYL-D-ERYTHRITOL KINASE, CHLOROPLASTIC"/>
    <property type="match status" value="1"/>
</dbReference>
<dbReference type="PANTHER" id="PTHR43527:SF2">
    <property type="entry name" value="4-DIPHOSPHOCYTIDYL-2-C-METHYL-D-ERYTHRITOL KINASE, CHLOROPLASTIC"/>
    <property type="match status" value="1"/>
</dbReference>
<dbReference type="Pfam" id="PF08544">
    <property type="entry name" value="GHMP_kinases_C"/>
    <property type="match status" value="1"/>
</dbReference>
<dbReference type="Pfam" id="PF00288">
    <property type="entry name" value="GHMP_kinases_N"/>
    <property type="match status" value="1"/>
</dbReference>
<dbReference type="PIRSF" id="PIRSF010376">
    <property type="entry name" value="IspE"/>
    <property type="match status" value="1"/>
</dbReference>
<dbReference type="PRINTS" id="PR00958">
    <property type="entry name" value="HOMSERKINASE"/>
</dbReference>
<dbReference type="SUPFAM" id="SSF55060">
    <property type="entry name" value="GHMP Kinase, C-terminal domain"/>
    <property type="match status" value="1"/>
</dbReference>
<dbReference type="SUPFAM" id="SSF54211">
    <property type="entry name" value="Ribosomal protein S5 domain 2-like"/>
    <property type="match status" value="1"/>
</dbReference>
<comment type="function">
    <text evidence="1">Catalyzes the phosphorylation of the position 2 hydroxy group of 4-diphosphocytidyl-2C-methyl-D-erythritol.</text>
</comment>
<comment type="catalytic activity">
    <reaction evidence="1">
        <text>4-CDP-2-C-methyl-D-erythritol + ATP = 4-CDP-2-C-methyl-D-erythritol 2-phosphate + ADP + H(+)</text>
        <dbReference type="Rhea" id="RHEA:18437"/>
        <dbReference type="ChEBI" id="CHEBI:15378"/>
        <dbReference type="ChEBI" id="CHEBI:30616"/>
        <dbReference type="ChEBI" id="CHEBI:57823"/>
        <dbReference type="ChEBI" id="CHEBI:57919"/>
        <dbReference type="ChEBI" id="CHEBI:456216"/>
        <dbReference type="EC" id="2.7.1.148"/>
    </reaction>
</comment>
<comment type="pathway">
    <text evidence="1">Isoprenoid biosynthesis; isopentenyl diphosphate biosynthesis via DXP pathway; isopentenyl diphosphate from 1-deoxy-D-xylulose 5-phosphate: step 3/6.</text>
</comment>
<comment type="similarity">
    <text evidence="1">Belongs to the GHMP kinase family. IspE subfamily.</text>
</comment>
<keyword id="KW-0067">ATP-binding</keyword>
<keyword id="KW-0414">Isoprene biosynthesis</keyword>
<keyword id="KW-0418">Kinase</keyword>
<keyword id="KW-0547">Nucleotide-binding</keyword>
<keyword id="KW-0808">Transferase</keyword>
<proteinExistence type="inferred from homology"/>
<reference key="1">
    <citation type="submission" date="2005-09" db="EMBL/GenBank/DDBJ databases">
        <title>Complete genome sequence of Clostridium kluyveri and comparative genomics of Clostridia species.</title>
        <authorList>
            <person name="Inui M."/>
            <person name="Nonaka H."/>
            <person name="Shinoda Y."/>
            <person name="Ikenaga Y."/>
            <person name="Abe M."/>
            <person name="Naito K."/>
            <person name="Vertes A.A."/>
            <person name="Yukawa H."/>
        </authorList>
    </citation>
    <scope>NUCLEOTIDE SEQUENCE [LARGE SCALE GENOMIC DNA]</scope>
    <source>
        <strain>NBRC 12016</strain>
    </source>
</reference>
<accession>B9DX96</accession>
<evidence type="ECO:0000255" key="1">
    <source>
        <dbReference type="HAMAP-Rule" id="MF_00061"/>
    </source>
</evidence>
<organism>
    <name type="scientific">Clostridium kluyveri (strain NBRC 12016)</name>
    <dbReference type="NCBI Taxonomy" id="583346"/>
    <lineage>
        <taxon>Bacteria</taxon>
        <taxon>Bacillati</taxon>
        <taxon>Bacillota</taxon>
        <taxon>Clostridia</taxon>
        <taxon>Eubacteriales</taxon>
        <taxon>Clostridiaceae</taxon>
        <taxon>Clostridium</taxon>
    </lineage>
</organism>
<feature type="chain" id="PRO_1000190682" description="4-diphosphocytidyl-2-C-methyl-D-erythritol kinase">
    <location>
        <begin position="1"/>
        <end position="280"/>
    </location>
</feature>
<feature type="active site" evidence="1">
    <location>
        <position position="8"/>
    </location>
</feature>
<feature type="active site" evidence="1">
    <location>
        <position position="133"/>
    </location>
</feature>
<feature type="binding site" evidence="1">
    <location>
        <begin position="91"/>
        <end position="101"/>
    </location>
    <ligand>
        <name>ATP</name>
        <dbReference type="ChEBI" id="CHEBI:30616"/>
    </ligand>
</feature>
<name>ISPE_CLOK1</name>
<gene>
    <name evidence="1" type="primary">ispE</name>
    <name type="ordered locus">CKR_3288</name>
</gene>
<sequence>MLIKAYAKINLSLDVIGKREDGYHLLKMIMQTIDLYDLLNITPIEKGIEIKCNKSYIPCDKRNLVYKAVELFASNYGIKSGVSIDIIKNIPVAAGLAGGSSDAAAVLKVMRDIYIPELEYKDLIKLGTSIGADVPYCMIGGTALCQGIGEKVTSISSFKNHILVLVKPFFGVSTAEVYKSLDISKIKIHPNTDILINAINSGSLLKVSKNMKNVLENVTLKKHPLLRKIKNELIDFGALGALMSGSGPSIFAFFDDMLKAQICYDKMKTKYKEVFITRTV</sequence>
<protein>
    <recommendedName>
        <fullName evidence="1">4-diphosphocytidyl-2-C-methyl-D-erythritol kinase</fullName>
        <shortName evidence="1">CMK</shortName>
        <ecNumber evidence="1">2.7.1.148</ecNumber>
    </recommendedName>
    <alternativeName>
        <fullName evidence="1">4-(cytidine-5'-diphospho)-2-C-methyl-D-erythritol kinase</fullName>
    </alternativeName>
</protein>